<dbReference type="EMBL" id="CP000504">
    <property type="protein sequence ID" value="ABL88093.1"/>
    <property type="molecule type" value="Genomic_DNA"/>
</dbReference>
<dbReference type="RefSeq" id="WP_011762668.1">
    <property type="nucleotide sequence ID" value="NC_008701.1"/>
</dbReference>
<dbReference type="SMR" id="A1RT11"/>
<dbReference type="STRING" id="384616.Pisl_0917"/>
<dbReference type="GeneID" id="4617614"/>
<dbReference type="KEGG" id="pis:Pisl_0917"/>
<dbReference type="eggNOG" id="arCOG04113">
    <property type="taxonomic scope" value="Archaea"/>
</dbReference>
<dbReference type="HOGENOM" id="CLU_084051_0_2_2"/>
<dbReference type="OrthoDB" id="30538at2157"/>
<dbReference type="Proteomes" id="UP000002595">
    <property type="component" value="Chromosome"/>
</dbReference>
<dbReference type="GO" id="GO:1990904">
    <property type="term" value="C:ribonucleoprotein complex"/>
    <property type="evidence" value="ECO:0007669"/>
    <property type="project" value="UniProtKB-KW"/>
</dbReference>
<dbReference type="GO" id="GO:0005840">
    <property type="term" value="C:ribosome"/>
    <property type="evidence" value="ECO:0007669"/>
    <property type="project" value="UniProtKB-KW"/>
</dbReference>
<dbReference type="GO" id="GO:0003735">
    <property type="term" value="F:structural constituent of ribosome"/>
    <property type="evidence" value="ECO:0007669"/>
    <property type="project" value="InterPro"/>
</dbReference>
<dbReference type="GO" id="GO:0006412">
    <property type="term" value="P:translation"/>
    <property type="evidence" value="ECO:0007669"/>
    <property type="project" value="UniProtKB-UniRule"/>
</dbReference>
<dbReference type="CDD" id="cd01433">
    <property type="entry name" value="Ribosomal_L16_L10e"/>
    <property type="match status" value="1"/>
</dbReference>
<dbReference type="FunFam" id="3.90.1170.10:FF:000008">
    <property type="entry name" value="50S ribosomal protein L10e"/>
    <property type="match status" value="1"/>
</dbReference>
<dbReference type="Gene3D" id="3.90.1170.10">
    <property type="entry name" value="Ribosomal protein L10e/L16"/>
    <property type="match status" value="1"/>
</dbReference>
<dbReference type="HAMAP" id="MF_00448">
    <property type="entry name" value="Ribosomal_uL16_arch"/>
    <property type="match status" value="1"/>
</dbReference>
<dbReference type="InterPro" id="IPR047873">
    <property type="entry name" value="Ribosomal_uL16"/>
</dbReference>
<dbReference type="InterPro" id="IPR022981">
    <property type="entry name" value="Ribosomal_uL16_arc"/>
</dbReference>
<dbReference type="InterPro" id="IPR018255">
    <property type="entry name" value="Ribosomal_uL16_CS_euk_arc"/>
</dbReference>
<dbReference type="InterPro" id="IPR016180">
    <property type="entry name" value="Ribosomal_uL16_dom"/>
</dbReference>
<dbReference type="InterPro" id="IPR001197">
    <property type="entry name" value="Ribosomal_uL16_euk_arch"/>
</dbReference>
<dbReference type="InterPro" id="IPR036920">
    <property type="entry name" value="Ribosomal_uL16_sf"/>
</dbReference>
<dbReference type="NCBIfam" id="NF003236">
    <property type="entry name" value="PRK04199.1-1"/>
    <property type="match status" value="1"/>
</dbReference>
<dbReference type="NCBIfam" id="NF003239">
    <property type="entry name" value="PRK04199.1-4"/>
    <property type="match status" value="1"/>
</dbReference>
<dbReference type="PANTHER" id="PTHR11726">
    <property type="entry name" value="60S RIBOSOMAL PROTEIN L10"/>
    <property type="match status" value="1"/>
</dbReference>
<dbReference type="Pfam" id="PF00252">
    <property type="entry name" value="Ribosomal_L16"/>
    <property type="match status" value="1"/>
</dbReference>
<dbReference type="PIRSF" id="PIRSF005590">
    <property type="entry name" value="Ribosomal_L10"/>
    <property type="match status" value="1"/>
</dbReference>
<dbReference type="SUPFAM" id="SSF54686">
    <property type="entry name" value="Ribosomal protein L16p/L10e"/>
    <property type="match status" value="1"/>
</dbReference>
<dbReference type="PROSITE" id="PS01257">
    <property type="entry name" value="RIBOSOMAL_L10E"/>
    <property type="match status" value="1"/>
</dbReference>
<proteinExistence type="inferred from homology"/>
<name>RL10E_PYRIL</name>
<evidence type="ECO:0000255" key="1">
    <source>
        <dbReference type="HAMAP-Rule" id="MF_00448"/>
    </source>
</evidence>
<evidence type="ECO:0000305" key="2"/>
<reference key="1">
    <citation type="submission" date="2006-12" db="EMBL/GenBank/DDBJ databases">
        <title>Complete sequence of Pyrobaculum islandicum DSM 4184.</title>
        <authorList>
            <person name="Copeland A."/>
            <person name="Lucas S."/>
            <person name="Lapidus A."/>
            <person name="Barry K."/>
            <person name="Detter J.C."/>
            <person name="Glavina del Rio T."/>
            <person name="Dalin E."/>
            <person name="Tice H."/>
            <person name="Pitluck S."/>
            <person name="Meincke L."/>
            <person name="Brettin T."/>
            <person name="Bruce D."/>
            <person name="Han C."/>
            <person name="Tapia R."/>
            <person name="Gilna P."/>
            <person name="Schmutz J."/>
            <person name="Larimer F."/>
            <person name="Land M."/>
            <person name="Hauser L."/>
            <person name="Kyrpides N."/>
            <person name="Mikhailova N."/>
            <person name="Cozen A.E."/>
            <person name="Fitz-Gibbon S.T."/>
            <person name="House C.H."/>
            <person name="Saltikov C."/>
            <person name="Lowe T."/>
            <person name="Richardson P."/>
        </authorList>
    </citation>
    <scope>NUCLEOTIDE SEQUENCE [LARGE SCALE GENOMIC DNA]</scope>
    <source>
        <strain>DSM 4184 / JCM 9189 / GEO3</strain>
    </source>
</reference>
<accession>A1RT11</accession>
<keyword id="KW-0687">Ribonucleoprotein</keyword>
<keyword id="KW-0689">Ribosomal protein</keyword>
<comment type="similarity">
    <text evidence="1">Belongs to the universal ribosomal protein uL16 family.</text>
</comment>
<feature type="chain" id="PRO_1000026196" description="Large ribosomal subunit protein uL16">
    <location>
        <begin position="1"/>
        <end position="182"/>
    </location>
</feature>
<gene>
    <name evidence="1" type="primary">rpl10e</name>
    <name type="ordered locus">Pisl_0917</name>
</gene>
<sequence length="182" mass="20514">MPVRPARCYRRIKGPPYTREEYIHGAPMIQIPKFDMGVTSAAARAAFSMVAKLVVEERGQIRMQALEAARQMAYKYLSKYVGDANYYLRLNVVPHHVLRENRMLAMAGADRLQEGMRLAFGSPAGRAARVEPGQVIFYAEFRPEHIAHIKEALRRAASKLPLPTRIVIETKDDGGGKTFTQK</sequence>
<organism>
    <name type="scientific">Pyrobaculum islandicum (strain DSM 4184 / JCM 9189 / GEO3)</name>
    <dbReference type="NCBI Taxonomy" id="384616"/>
    <lineage>
        <taxon>Archaea</taxon>
        <taxon>Thermoproteota</taxon>
        <taxon>Thermoprotei</taxon>
        <taxon>Thermoproteales</taxon>
        <taxon>Thermoproteaceae</taxon>
        <taxon>Pyrobaculum</taxon>
    </lineage>
</organism>
<protein>
    <recommendedName>
        <fullName evidence="1">Large ribosomal subunit protein uL16</fullName>
    </recommendedName>
    <alternativeName>
        <fullName evidence="2">50S ribosomal protein L10e</fullName>
    </alternativeName>
</protein>